<accession>P59510</accession>
<accession>A6NNC9</accession>
<accession>J3QT00</accession>
<protein>
    <recommendedName>
        <fullName>A disintegrin and metalloproteinase with thrombospondin motifs 20</fullName>
        <shortName>ADAM-TS 20</shortName>
        <shortName>ADAM-TS20</shortName>
        <shortName>ADAMTS-20</shortName>
        <ecNumber>3.4.24.-</ecNumber>
    </recommendedName>
</protein>
<sequence length="1910" mass="214721">MWVAKWLTGLLYHLSLFITRSWEVDFHPRQEALVRTLTSYEVVIPERVNEFGEVFPQSHHFSRQKRSSEALEPMPFRTHYRFTAYGQLFQLNLTADASFLAAGYTEVHLGTPERGAWESDAGPSDLRHCFYRGQVNSQEDYKAVVSLCGGLTGTFKGQNGEYFLEPIMKADGNEYEDGHNKPHLIYRQDLNNSFLQTLKYCSVSESQIKETSLPFHTYSNMNEDLNVMKERVLGHTSKNVPLKDERRHSRKKRLISYPRYIEIMVTADAKVVSAHGSNLQNYILTLMSIVATIYKDPSIGNLIHIVVVKLVMIHREEEGPVINFDGATTLKNFCSWQQTQNDLDDVHPSHHDTAVLITREDICSSKEKCNMLGLSYLGTICDPLQSCFINEEKGLISAFTIAHELGHTLGVQHDDNPRCKEMKVTKYHVMAPALSFHMSPWSWSNCSRKYVTEFLDTGYGECLLDKPDEEIYNLPSELPGSRYDGNKQCELAFGPGSQMCPHINICMHLWCTSTEKLHKGCFTQHVPPADGTDCGPGMHCRHGLCVNKETETRPVNGEWGPWEPYSSCSRTCGGGIESATRRCNRPEPRNGGNYCVGRRMKFRSCNTDSCPKGTQDFREKQCSDFNGKHLDISGIPSNVRWLPRYSGIGTKDRCKLYCQVAGTNYFYLLKDMVEDGTPCGTETHDICVQGQCMAAGCDHVLNSSAKIDKCGVCGGDNSSCKTITGVFNSSHYGYNVVVKIPAGATNVDIRQYSYSGQPDDSYLALSDAEGNFLFNGNFLLSTSKKEINVQGTRTVIEYSGSNNAVERINSTNRQEKEILIEVLCVGNLYNPDVHYSFNIPLEERSDMFTWDPYGPWEGCTKMCQGLQRRNITCIHKSDHSVVSDKECDHLPLPSFVTQSCNTDCELRWHVIGKSECSSQCGQGYRTLDIHCMKYSIHEGQTVQVDDHYCGDQLKPPTQELCHGNCVFTRWHYSEWSQCSRSCGGGERSRESYCMNNFGHRLADNECQELSRVTRENCNEFSCPSWAASEWSECLVTCGKGTKQRQVWCQLNVDHLSDGFCNSSTKPESLSPCELHTCASWQVGPWGPCTTTCGHGYQMRDVKCVNELASAVLEDTECHEASRPSDRQSCVLTPCSFISKLETALLPTVLIKKMAQWRHGSWTPCSVSCGRGTQARYVSCRDALDRIADESYCAHLPRPAEIWDCFTPCGEWQAGDWSPCSASCGHGKTTRQVLCMNYHQPIDENYCDPEVRPLMEQECSLAACPPAHSHFPSSPVQPSYYLSTNLPLTQKLEDNENQVVHPSVRGNQWRTGPWGSCSSSCSGGLQHRAVVCQDENGQSASYCDAASKPPELQQCGPGPCPQWNYGNWGECSQTCGGGIKSRLVICQFPNGQILEDHNCEIVNKPPSVIQCHMHACPADVSWHQEPWTSCSASCGKGRKYREVFCIDQFQRKLEDTNCSQVQKPPTHKACRSVRCPSWKANSWNECSVTCGSGVQQRDVYCRLKGVGQVVEEMCDQSTRPCSQRRCWSQDCVQHKGMERGRLNCSTSCERKDSHQRMECTDNQIRQVNEIVYNSSTISLTSKNCRNPPCNYIVVTADSSQCANNCGFSYRQRITYCTEIPSTKKHKLHRLRPIVYQECPVVPSSQVYQCINSCLHLATWKVGKWSKCSVTCGIGIMKRQVKCITKHGLSSDLCLNHLKPGAQKKCYANDCKSFTTCKEIQVKNHIRKDGDYYLNIKGRIIKIYCADMYLENPKEYLTLVQGEENFSEVYGFRLKNPYQCPFNGSRREDCECDNGHLAAGYTVFSKIRIDLTSMQIKTTDLLFSKTIFGNAVPFATAGDCYSAFRCPQGQFSINLSGTGMKISSTAKWLTQGSYTSVSIRRSEDGTRFFGKCGGYCGKCLPHMTTGLPIQVI</sequence>
<reference key="1">
    <citation type="journal article" date="2003" name="J. Biol. Chem.">
        <title>Characterization of ADAMTS-9 and ADAMTS-20 as a distinct ADAMTS subfamily related to Caenorhabditis elegans GON-1.</title>
        <authorList>
            <person name="Somerville R.P."/>
            <person name="Longpre J.-M."/>
            <person name="Jungers K.A."/>
            <person name="Engle J.M."/>
            <person name="Ross M."/>
            <person name="Evanko S."/>
            <person name="Wight T.N."/>
            <person name="Leduc R."/>
            <person name="Apte S.S."/>
        </authorList>
    </citation>
    <scope>NUCLEOTIDE SEQUENCE [MRNA] (ISOFORM 3)</scope>
</reference>
<reference key="2">
    <citation type="journal article" date="2003" name="J. Biol. Chem.">
        <title>Identification and characterization of ADAMTS-20 defines a novel subfamily of metalloproteinases-disintegrins with multiple thrombospondin-1 repeats and a unique GON domain.</title>
        <authorList>
            <person name="Llamazares M."/>
            <person name="Cal S."/>
            <person name="Quesada V."/>
            <person name="Lopez-Otin C."/>
        </authorList>
    </citation>
    <scope>NUCLEOTIDE SEQUENCE [MRNA] (ISOFORMS 1 AND 2)</scope>
    <source>
        <tissue>Liver</tissue>
    </source>
</reference>
<reference key="3">
    <citation type="journal article" date="2006" name="Nature">
        <title>The finished DNA sequence of human chromosome 12.</title>
        <authorList>
            <person name="Scherer S.E."/>
            <person name="Muzny D.M."/>
            <person name="Buhay C.J."/>
            <person name="Chen R."/>
            <person name="Cree A."/>
            <person name="Ding Y."/>
            <person name="Dugan-Rocha S."/>
            <person name="Gill R."/>
            <person name="Gunaratne P."/>
            <person name="Harris R.A."/>
            <person name="Hawes A.C."/>
            <person name="Hernandez J."/>
            <person name="Hodgson A.V."/>
            <person name="Hume J."/>
            <person name="Jackson A."/>
            <person name="Khan Z.M."/>
            <person name="Kovar-Smith C."/>
            <person name="Lewis L.R."/>
            <person name="Lozado R.J."/>
            <person name="Metzker M.L."/>
            <person name="Milosavljevic A."/>
            <person name="Miner G.R."/>
            <person name="Montgomery K.T."/>
            <person name="Morgan M.B."/>
            <person name="Nazareth L.V."/>
            <person name="Scott G."/>
            <person name="Sodergren E."/>
            <person name="Song X.-Z."/>
            <person name="Steffen D."/>
            <person name="Lovering R.C."/>
            <person name="Wheeler D.A."/>
            <person name="Worley K.C."/>
            <person name="Yuan Y."/>
            <person name="Zhang Z."/>
            <person name="Adams C.Q."/>
            <person name="Ansari-Lari M.A."/>
            <person name="Ayele M."/>
            <person name="Brown M.J."/>
            <person name="Chen G."/>
            <person name="Chen Z."/>
            <person name="Clerc-Blankenburg K.P."/>
            <person name="Davis C."/>
            <person name="Delgado O."/>
            <person name="Dinh H.H."/>
            <person name="Draper H."/>
            <person name="Gonzalez-Garay M.L."/>
            <person name="Havlak P."/>
            <person name="Jackson L.R."/>
            <person name="Jacob L.S."/>
            <person name="Kelly S.H."/>
            <person name="Li L."/>
            <person name="Li Z."/>
            <person name="Liu J."/>
            <person name="Liu W."/>
            <person name="Lu J."/>
            <person name="Maheshwari M."/>
            <person name="Nguyen B.-V."/>
            <person name="Okwuonu G.O."/>
            <person name="Pasternak S."/>
            <person name="Perez L.M."/>
            <person name="Plopper F.J.H."/>
            <person name="Santibanez J."/>
            <person name="Shen H."/>
            <person name="Tabor P.E."/>
            <person name="Verduzco D."/>
            <person name="Waldron L."/>
            <person name="Wang Q."/>
            <person name="Williams G.A."/>
            <person name="Zhang J."/>
            <person name="Zhou J."/>
            <person name="Allen C.C."/>
            <person name="Amin A.G."/>
            <person name="Anyalebechi V."/>
            <person name="Bailey M."/>
            <person name="Barbaria J.A."/>
            <person name="Bimage K.E."/>
            <person name="Bryant N.P."/>
            <person name="Burch P.E."/>
            <person name="Burkett C.E."/>
            <person name="Burrell K.L."/>
            <person name="Calderon E."/>
            <person name="Cardenas V."/>
            <person name="Carter K."/>
            <person name="Casias K."/>
            <person name="Cavazos I."/>
            <person name="Cavazos S.R."/>
            <person name="Ceasar H."/>
            <person name="Chacko J."/>
            <person name="Chan S.N."/>
            <person name="Chavez D."/>
            <person name="Christopoulos C."/>
            <person name="Chu J."/>
            <person name="Cockrell R."/>
            <person name="Cox C.D."/>
            <person name="Dang M."/>
            <person name="Dathorne S.R."/>
            <person name="David R."/>
            <person name="Davis C.M."/>
            <person name="Davy-Carroll L."/>
            <person name="Deshazo D.R."/>
            <person name="Donlin J.E."/>
            <person name="D'Souza L."/>
            <person name="Eaves K.A."/>
            <person name="Egan A."/>
            <person name="Emery-Cohen A.J."/>
            <person name="Escotto M."/>
            <person name="Flagg N."/>
            <person name="Forbes L.D."/>
            <person name="Gabisi A.M."/>
            <person name="Garza M."/>
            <person name="Hamilton C."/>
            <person name="Henderson N."/>
            <person name="Hernandez O."/>
            <person name="Hines S."/>
            <person name="Hogues M.E."/>
            <person name="Huang M."/>
            <person name="Idlebird D.G."/>
            <person name="Johnson R."/>
            <person name="Jolivet A."/>
            <person name="Jones S."/>
            <person name="Kagan R."/>
            <person name="King L.M."/>
            <person name="Leal B."/>
            <person name="Lebow H."/>
            <person name="Lee S."/>
            <person name="LeVan J.M."/>
            <person name="Lewis L.C."/>
            <person name="London P."/>
            <person name="Lorensuhewa L.M."/>
            <person name="Loulseged H."/>
            <person name="Lovett D.A."/>
            <person name="Lucier A."/>
            <person name="Lucier R.L."/>
            <person name="Ma J."/>
            <person name="Madu R.C."/>
            <person name="Mapua P."/>
            <person name="Martindale A.D."/>
            <person name="Martinez E."/>
            <person name="Massey E."/>
            <person name="Mawhiney S."/>
            <person name="Meador M.G."/>
            <person name="Mendez S."/>
            <person name="Mercado C."/>
            <person name="Mercado I.C."/>
            <person name="Merritt C.E."/>
            <person name="Miner Z.L."/>
            <person name="Minja E."/>
            <person name="Mitchell T."/>
            <person name="Mohabbat F."/>
            <person name="Mohabbat K."/>
            <person name="Montgomery B."/>
            <person name="Moore N."/>
            <person name="Morris S."/>
            <person name="Munidasa M."/>
            <person name="Ngo R.N."/>
            <person name="Nguyen N.B."/>
            <person name="Nickerson E."/>
            <person name="Nwaokelemeh O.O."/>
            <person name="Nwokenkwo S."/>
            <person name="Obregon M."/>
            <person name="Oguh M."/>
            <person name="Oragunye N."/>
            <person name="Oviedo R.J."/>
            <person name="Parish B.J."/>
            <person name="Parker D.N."/>
            <person name="Parrish J."/>
            <person name="Parks K.L."/>
            <person name="Paul H.A."/>
            <person name="Payton B.A."/>
            <person name="Perez A."/>
            <person name="Perrin W."/>
            <person name="Pickens A."/>
            <person name="Primus E.L."/>
            <person name="Pu L.-L."/>
            <person name="Puazo M."/>
            <person name="Quiles M.M."/>
            <person name="Quiroz J.B."/>
            <person name="Rabata D."/>
            <person name="Reeves K."/>
            <person name="Ruiz S.J."/>
            <person name="Shao H."/>
            <person name="Sisson I."/>
            <person name="Sonaike T."/>
            <person name="Sorelle R.P."/>
            <person name="Sutton A.E."/>
            <person name="Svatek A.F."/>
            <person name="Svetz L.A."/>
            <person name="Tamerisa K.S."/>
            <person name="Taylor T.R."/>
            <person name="Teague B."/>
            <person name="Thomas N."/>
            <person name="Thorn R.D."/>
            <person name="Trejos Z.Y."/>
            <person name="Trevino B.K."/>
            <person name="Ukegbu O.N."/>
            <person name="Urban J.B."/>
            <person name="Vasquez L.I."/>
            <person name="Vera V.A."/>
            <person name="Villasana D.M."/>
            <person name="Wang L."/>
            <person name="Ward-Moore S."/>
            <person name="Warren J.T."/>
            <person name="Wei X."/>
            <person name="White F."/>
            <person name="Williamson A.L."/>
            <person name="Wleczyk R."/>
            <person name="Wooden H.S."/>
            <person name="Wooden S.H."/>
            <person name="Yen J."/>
            <person name="Yoon L."/>
            <person name="Yoon V."/>
            <person name="Zorrilla S.E."/>
            <person name="Nelson D."/>
            <person name="Kucherlapati R."/>
            <person name="Weinstock G."/>
            <person name="Gibbs R.A."/>
        </authorList>
    </citation>
    <scope>NUCLEOTIDE SEQUENCE [LARGE SCALE GENOMIC DNA]</scope>
</reference>
<reference key="4">
    <citation type="submission" date="2005-07" db="EMBL/GenBank/DDBJ databases">
        <authorList>
            <person name="Mural R.J."/>
            <person name="Istrail S."/>
            <person name="Sutton G.G."/>
            <person name="Florea L."/>
            <person name="Halpern A.L."/>
            <person name="Mobarry C.M."/>
            <person name="Lippert R."/>
            <person name="Walenz B."/>
            <person name="Shatkay H."/>
            <person name="Dew I."/>
            <person name="Miller J.R."/>
            <person name="Flanigan M.J."/>
            <person name="Edwards N.J."/>
            <person name="Bolanos R."/>
            <person name="Fasulo D."/>
            <person name="Halldorsson B.V."/>
            <person name="Hannenhalli S."/>
            <person name="Turner R."/>
            <person name="Yooseph S."/>
            <person name="Lu F."/>
            <person name="Nusskern D.R."/>
            <person name="Shue B.C."/>
            <person name="Zheng X.H."/>
            <person name="Zhong F."/>
            <person name="Delcher A.L."/>
            <person name="Huson D.H."/>
            <person name="Kravitz S.A."/>
            <person name="Mouchard L."/>
            <person name="Reinert K."/>
            <person name="Remington K.A."/>
            <person name="Clark A.G."/>
            <person name="Waterman M.S."/>
            <person name="Eichler E.E."/>
            <person name="Adams M.D."/>
            <person name="Hunkapiller M.W."/>
            <person name="Myers E.W."/>
            <person name="Venter J.C."/>
        </authorList>
    </citation>
    <scope>NUCLEOTIDE SEQUENCE [LARGE SCALE GENOMIC DNA]</scope>
</reference>
<proteinExistence type="evidence at protein level"/>
<dbReference type="EC" id="3.4.24.-"/>
<dbReference type="EMBL" id="AF488804">
    <property type="protein sequence ID" value="AAO15766.1"/>
    <property type="molecule type" value="mRNA"/>
</dbReference>
<dbReference type="EMBL" id="AJ515153">
    <property type="protein sequence ID" value="CAD56159.3"/>
    <property type="molecule type" value="mRNA"/>
</dbReference>
<dbReference type="EMBL" id="AJ515154">
    <property type="protein sequence ID" value="CAD56160.2"/>
    <property type="molecule type" value="mRNA"/>
</dbReference>
<dbReference type="EMBL" id="AC090525">
    <property type="status" value="NOT_ANNOTATED_CDS"/>
    <property type="molecule type" value="Genomic_DNA"/>
</dbReference>
<dbReference type="EMBL" id="AC107018">
    <property type="status" value="NOT_ANNOTATED_CDS"/>
    <property type="molecule type" value="Genomic_DNA"/>
</dbReference>
<dbReference type="EMBL" id="AC120104">
    <property type="status" value="NOT_ANNOTATED_CDS"/>
    <property type="molecule type" value="Genomic_DNA"/>
</dbReference>
<dbReference type="EMBL" id="CH471111">
    <property type="protein sequence ID" value="EAW57861.1"/>
    <property type="molecule type" value="Genomic_DNA"/>
</dbReference>
<dbReference type="CCDS" id="CCDS31778.2">
    <molecule id="P59510-3"/>
</dbReference>
<dbReference type="RefSeq" id="NP_079279.3">
    <molecule id="P59510-3"/>
    <property type="nucleotide sequence ID" value="NM_025003.4"/>
</dbReference>
<dbReference type="SMR" id="P59510"/>
<dbReference type="BioGRID" id="123100">
    <property type="interactions" value="4"/>
</dbReference>
<dbReference type="FunCoup" id="P59510">
    <property type="interactions" value="49"/>
</dbReference>
<dbReference type="IntAct" id="P59510">
    <property type="interactions" value="2"/>
</dbReference>
<dbReference type="MINT" id="P59510"/>
<dbReference type="STRING" id="9606.ENSP00000374071"/>
<dbReference type="MEROPS" id="M12.246"/>
<dbReference type="GlyCosmos" id="P59510">
    <property type="glycosylation" value="15 sites, No reported glycans"/>
</dbReference>
<dbReference type="GlyGen" id="P59510">
    <property type="glycosylation" value="16 sites, 2 N-linked glycans (2 sites), 1 O-linked glycan (1 site)"/>
</dbReference>
<dbReference type="iPTMnet" id="P59510"/>
<dbReference type="PhosphoSitePlus" id="P59510"/>
<dbReference type="BioMuta" id="ADAMTS20"/>
<dbReference type="DMDM" id="218511943"/>
<dbReference type="jPOST" id="P59510"/>
<dbReference type="MassIVE" id="P59510"/>
<dbReference type="PaxDb" id="9606-ENSP00000374071"/>
<dbReference type="PeptideAtlas" id="P59510"/>
<dbReference type="Antibodypedia" id="25100">
    <property type="antibodies" value="29 antibodies from 15 providers"/>
</dbReference>
<dbReference type="DNASU" id="80070"/>
<dbReference type="Ensembl" id="ENST00000389420.8">
    <molecule id="P59510-3"/>
    <property type="protein sequence ID" value="ENSP00000374071.3"/>
    <property type="gene ID" value="ENSG00000173157.18"/>
</dbReference>
<dbReference type="GeneID" id="80070"/>
<dbReference type="KEGG" id="hsa:80070"/>
<dbReference type="MANE-Select" id="ENST00000389420.8">
    <molecule id="P59510-3"/>
    <property type="protein sequence ID" value="ENSP00000374071.3"/>
    <property type="RefSeq nucleotide sequence ID" value="NM_025003.5"/>
    <property type="RefSeq protein sequence ID" value="NP_079279.3"/>
</dbReference>
<dbReference type="UCSC" id="uc010skx.3">
    <molecule id="P59510-1"/>
    <property type="organism name" value="human"/>
</dbReference>
<dbReference type="AGR" id="HGNC:17178"/>
<dbReference type="CTD" id="80070"/>
<dbReference type="DisGeNET" id="80070"/>
<dbReference type="GeneCards" id="ADAMTS20"/>
<dbReference type="HGNC" id="HGNC:17178">
    <property type="gene designation" value="ADAMTS20"/>
</dbReference>
<dbReference type="HPA" id="ENSG00000173157">
    <property type="expression patterns" value="Not detected"/>
</dbReference>
<dbReference type="MIM" id="611681">
    <property type="type" value="gene"/>
</dbReference>
<dbReference type="neXtProt" id="NX_P59510"/>
<dbReference type="OpenTargets" id="ENSG00000173157"/>
<dbReference type="PharmGKB" id="PA134901626"/>
<dbReference type="VEuPathDB" id="HostDB:ENSG00000173157"/>
<dbReference type="eggNOG" id="KOG3538">
    <property type="taxonomic scope" value="Eukaryota"/>
</dbReference>
<dbReference type="GeneTree" id="ENSGT00940000158636"/>
<dbReference type="HOGENOM" id="CLU_000660_0_1_1"/>
<dbReference type="InParanoid" id="P59510"/>
<dbReference type="OMA" id="RWITEDV"/>
<dbReference type="OrthoDB" id="5948003at2759"/>
<dbReference type="PAN-GO" id="P59510">
    <property type="GO annotations" value="3 GO annotations based on evolutionary models"/>
</dbReference>
<dbReference type="PhylomeDB" id="P59510"/>
<dbReference type="TreeFam" id="TF331949"/>
<dbReference type="PathwayCommons" id="P59510"/>
<dbReference type="Reactome" id="R-HSA-5083635">
    <property type="pathway name" value="Defective B3GALTL causes PpS"/>
</dbReference>
<dbReference type="Reactome" id="R-HSA-5173214">
    <property type="pathway name" value="O-glycosylation of TSR domain-containing proteins"/>
</dbReference>
<dbReference type="SignaLink" id="P59510"/>
<dbReference type="BioGRID-ORCS" id="80070">
    <property type="hits" value="6 hits in 1139 CRISPR screens"/>
</dbReference>
<dbReference type="ChiTaRS" id="ADAMTS20">
    <property type="organism name" value="human"/>
</dbReference>
<dbReference type="GenomeRNAi" id="80070"/>
<dbReference type="Pharos" id="P59510">
    <property type="development level" value="Tbio"/>
</dbReference>
<dbReference type="PRO" id="PR:P59510"/>
<dbReference type="Proteomes" id="UP000005640">
    <property type="component" value="Chromosome 12"/>
</dbReference>
<dbReference type="RNAct" id="P59510">
    <property type="molecule type" value="protein"/>
</dbReference>
<dbReference type="Bgee" id="ENSG00000173157">
    <property type="expression patterns" value="Expressed in male germ line stem cell (sensu Vertebrata) in testis and 4 other cell types or tissues"/>
</dbReference>
<dbReference type="ExpressionAtlas" id="P59510">
    <property type="expression patterns" value="baseline and differential"/>
</dbReference>
<dbReference type="GO" id="GO:0031012">
    <property type="term" value="C:extracellular matrix"/>
    <property type="evidence" value="ECO:0000318"/>
    <property type="project" value="GO_Central"/>
</dbReference>
<dbReference type="GO" id="GO:0005615">
    <property type="term" value="C:extracellular space"/>
    <property type="evidence" value="ECO:0007669"/>
    <property type="project" value="Ensembl"/>
</dbReference>
<dbReference type="GO" id="GO:0004222">
    <property type="term" value="F:metalloendopeptidase activity"/>
    <property type="evidence" value="ECO:0000318"/>
    <property type="project" value="GO_Central"/>
</dbReference>
<dbReference type="GO" id="GO:0008270">
    <property type="term" value="F:zinc ion binding"/>
    <property type="evidence" value="ECO:0007669"/>
    <property type="project" value="InterPro"/>
</dbReference>
<dbReference type="GO" id="GO:0006915">
    <property type="term" value="P:apoptotic process"/>
    <property type="evidence" value="ECO:0007669"/>
    <property type="project" value="Ensembl"/>
</dbReference>
<dbReference type="GO" id="GO:0030198">
    <property type="term" value="P:extracellular matrix organization"/>
    <property type="evidence" value="ECO:0000318"/>
    <property type="project" value="GO_Central"/>
</dbReference>
<dbReference type="GO" id="GO:0030318">
    <property type="term" value="P:melanocyte differentiation"/>
    <property type="evidence" value="ECO:0007669"/>
    <property type="project" value="Ensembl"/>
</dbReference>
<dbReference type="GO" id="GO:0043066">
    <property type="term" value="P:negative regulation of apoptotic process"/>
    <property type="evidence" value="ECO:0007669"/>
    <property type="project" value="Ensembl"/>
</dbReference>
<dbReference type="GO" id="GO:0045636">
    <property type="term" value="P:positive regulation of melanocyte differentiation"/>
    <property type="evidence" value="ECO:0007669"/>
    <property type="project" value="Ensembl"/>
</dbReference>
<dbReference type="GO" id="GO:0009967">
    <property type="term" value="P:positive regulation of signal transduction"/>
    <property type="evidence" value="ECO:0007669"/>
    <property type="project" value="Ensembl"/>
</dbReference>
<dbReference type="GO" id="GO:0006508">
    <property type="term" value="P:proteolysis"/>
    <property type="evidence" value="ECO:0000318"/>
    <property type="project" value="GO_Central"/>
</dbReference>
<dbReference type="GO" id="GO:0007165">
    <property type="term" value="P:signal transduction"/>
    <property type="evidence" value="ECO:0007669"/>
    <property type="project" value="Ensembl"/>
</dbReference>
<dbReference type="CDD" id="cd04273">
    <property type="entry name" value="ZnMc_ADAMTS_like"/>
    <property type="match status" value="1"/>
</dbReference>
<dbReference type="FunFam" id="2.20.100.10:FF:000006">
    <property type="entry name" value="A disintegrin and metalloproteinase with thrombospondin motifs 1"/>
    <property type="match status" value="1"/>
</dbReference>
<dbReference type="FunFam" id="2.60.120.830:FF:000001">
    <property type="entry name" value="A disintegrin and metalloproteinase with thrombospondin motifs 1"/>
    <property type="match status" value="1"/>
</dbReference>
<dbReference type="FunFam" id="3.40.390.10:FF:000001">
    <property type="entry name" value="A disintegrin and metalloproteinase with thrombospondin motifs 1"/>
    <property type="match status" value="1"/>
</dbReference>
<dbReference type="FunFam" id="2.20.100.10:FF:000005">
    <property type="entry name" value="ADAM metallopeptidase with thrombospondin type 1 motif 9"/>
    <property type="match status" value="7"/>
</dbReference>
<dbReference type="FunFam" id="2.20.100.10:FF:000010">
    <property type="entry name" value="ADAM metallopeptidase with thrombospondin type 1 motif 9"/>
    <property type="match status" value="2"/>
</dbReference>
<dbReference type="Gene3D" id="2.60.120.830">
    <property type="match status" value="1"/>
</dbReference>
<dbReference type="Gene3D" id="3.40.1620.60">
    <property type="match status" value="2"/>
</dbReference>
<dbReference type="Gene3D" id="3.40.390.10">
    <property type="entry name" value="Collagenase (Catalytic Domain)"/>
    <property type="match status" value="1"/>
</dbReference>
<dbReference type="Gene3D" id="2.20.100.10">
    <property type="entry name" value="Thrombospondin type-1 (TSP1) repeat"/>
    <property type="match status" value="11"/>
</dbReference>
<dbReference type="InterPro" id="IPR013273">
    <property type="entry name" value="ADAMTS/ADAMTS-like"/>
</dbReference>
<dbReference type="InterPro" id="IPR050439">
    <property type="entry name" value="ADAMTS_ADAMTS-like"/>
</dbReference>
<dbReference type="InterPro" id="IPR041645">
    <property type="entry name" value="ADAMTS_CR_2"/>
</dbReference>
<dbReference type="InterPro" id="IPR045371">
    <property type="entry name" value="ADAMTS_CR_3"/>
</dbReference>
<dbReference type="InterPro" id="IPR010294">
    <property type="entry name" value="ADAMTS_spacer1"/>
</dbReference>
<dbReference type="InterPro" id="IPR024079">
    <property type="entry name" value="MetalloPept_cat_dom_sf"/>
</dbReference>
<dbReference type="InterPro" id="IPR012314">
    <property type="entry name" value="Pept_M12B_GON-ADAMTSs"/>
</dbReference>
<dbReference type="InterPro" id="IPR001590">
    <property type="entry name" value="Peptidase_M12B"/>
</dbReference>
<dbReference type="InterPro" id="IPR002870">
    <property type="entry name" value="Peptidase_M12B_N"/>
</dbReference>
<dbReference type="InterPro" id="IPR000884">
    <property type="entry name" value="TSP1_rpt"/>
</dbReference>
<dbReference type="InterPro" id="IPR036383">
    <property type="entry name" value="TSP1_rpt_sf"/>
</dbReference>
<dbReference type="PANTHER" id="PTHR13723">
    <property type="entry name" value="ADAMTS A DISINTEGRIN AND METALLOPROTEASE WITH THROMBOSPONDIN MOTIFS PROTEASE"/>
    <property type="match status" value="1"/>
</dbReference>
<dbReference type="PANTHER" id="PTHR13723:SF281">
    <property type="entry name" value="PAPILIN"/>
    <property type="match status" value="1"/>
</dbReference>
<dbReference type="Pfam" id="PF17771">
    <property type="entry name" value="ADAMTS_CR_2"/>
    <property type="match status" value="1"/>
</dbReference>
<dbReference type="Pfam" id="PF19236">
    <property type="entry name" value="ADAMTS_CR_3"/>
    <property type="match status" value="1"/>
</dbReference>
<dbReference type="Pfam" id="PF05986">
    <property type="entry name" value="ADAMTS_spacer1"/>
    <property type="match status" value="1"/>
</dbReference>
<dbReference type="Pfam" id="PF08685">
    <property type="entry name" value="GON"/>
    <property type="match status" value="1"/>
</dbReference>
<dbReference type="Pfam" id="PF01562">
    <property type="entry name" value="Pep_M12B_propep"/>
    <property type="match status" value="1"/>
</dbReference>
<dbReference type="Pfam" id="PF01421">
    <property type="entry name" value="Reprolysin"/>
    <property type="match status" value="1"/>
</dbReference>
<dbReference type="Pfam" id="PF19030">
    <property type="entry name" value="TSP1_ADAMTS"/>
    <property type="match status" value="12"/>
</dbReference>
<dbReference type="Pfam" id="PF00090">
    <property type="entry name" value="TSP_1"/>
    <property type="match status" value="1"/>
</dbReference>
<dbReference type="PRINTS" id="PR01857">
    <property type="entry name" value="ADAMTSFAMILY"/>
</dbReference>
<dbReference type="SMART" id="SM00209">
    <property type="entry name" value="TSP1"/>
    <property type="match status" value="13"/>
</dbReference>
<dbReference type="SUPFAM" id="SSF55486">
    <property type="entry name" value="Metalloproteases ('zincins'), catalytic domain"/>
    <property type="match status" value="1"/>
</dbReference>
<dbReference type="SUPFAM" id="SSF82895">
    <property type="entry name" value="TSP-1 type 1 repeat"/>
    <property type="match status" value="12"/>
</dbReference>
<dbReference type="PROSITE" id="PS50215">
    <property type="entry name" value="ADAM_MEPRO"/>
    <property type="match status" value="1"/>
</dbReference>
<dbReference type="PROSITE" id="PS51046">
    <property type="entry name" value="GON"/>
    <property type="match status" value="1"/>
</dbReference>
<dbReference type="PROSITE" id="PS50092">
    <property type="entry name" value="TSP1"/>
    <property type="match status" value="12"/>
</dbReference>
<dbReference type="PROSITE" id="PS00142">
    <property type="entry name" value="ZINC_PROTEASE"/>
    <property type="match status" value="1"/>
</dbReference>
<keyword id="KW-0025">Alternative splicing</keyword>
<keyword id="KW-0165">Cleavage on pair of basic residues</keyword>
<keyword id="KW-1015">Disulfide bond</keyword>
<keyword id="KW-0272">Extracellular matrix</keyword>
<keyword id="KW-0325">Glycoprotein</keyword>
<keyword id="KW-0378">Hydrolase</keyword>
<keyword id="KW-0479">Metal-binding</keyword>
<keyword id="KW-0482">Metalloprotease</keyword>
<keyword id="KW-0645">Protease</keyword>
<keyword id="KW-1267">Proteomics identification</keyword>
<keyword id="KW-1185">Reference proteome</keyword>
<keyword id="KW-0677">Repeat</keyword>
<keyword id="KW-0964">Secreted</keyword>
<keyword id="KW-0732">Signal</keyword>
<keyword id="KW-0862">Zinc</keyword>
<keyword id="KW-0865">Zymogen</keyword>
<organism>
    <name type="scientific">Homo sapiens</name>
    <name type="common">Human</name>
    <dbReference type="NCBI Taxonomy" id="9606"/>
    <lineage>
        <taxon>Eukaryota</taxon>
        <taxon>Metazoa</taxon>
        <taxon>Chordata</taxon>
        <taxon>Craniata</taxon>
        <taxon>Vertebrata</taxon>
        <taxon>Euteleostomi</taxon>
        <taxon>Mammalia</taxon>
        <taxon>Eutheria</taxon>
        <taxon>Euarchontoglires</taxon>
        <taxon>Primates</taxon>
        <taxon>Haplorrhini</taxon>
        <taxon>Catarrhini</taxon>
        <taxon>Hominidae</taxon>
        <taxon>Homo</taxon>
    </lineage>
</organism>
<feature type="signal peptide" evidence="2">
    <location>
        <begin position="1"/>
        <end position="21"/>
    </location>
</feature>
<feature type="propeptide" id="PRO_0000029206" evidence="1">
    <location>
        <begin position="22"/>
        <end position="253"/>
    </location>
</feature>
<feature type="chain" id="PRO_0000029207" description="A disintegrin and metalloproteinase with thrombospondin motifs 20">
    <location>
        <begin position="254"/>
        <end position="1910"/>
    </location>
</feature>
<feature type="domain" description="Peptidase M12B" evidence="4">
    <location>
        <begin position="259"/>
        <end position="467"/>
    </location>
</feature>
<feature type="domain" description="Disintegrin">
    <location>
        <begin position="468"/>
        <end position="555"/>
    </location>
</feature>
<feature type="domain" description="TSP type-1 1" evidence="3">
    <location>
        <begin position="556"/>
        <end position="611"/>
    </location>
</feature>
<feature type="domain" description="TSP type-1 2" evidence="3">
    <location>
        <begin position="846"/>
        <end position="904"/>
    </location>
</feature>
<feature type="domain" description="TSP type-1 3" evidence="3">
    <location>
        <begin position="905"/>
        <end position="961"/>
    </location>
</feature>
<feature type="domain" description="TSP type-1 4" evidence="3">
    <location>
        <begin position="966"/>
        <end position="1023"/>
    </location>
</feature>
<feature type="domain" description="TSP type-1 5" evidence="3">
    <location>
        <begin position="1024"/>
        <end position="1073"/>
    </location>
</feature>
<feature type="domain" description="TSP type-1 6" evidence="3">
    <location>
        <begin position="1076"/>
        <end position="1135"/>
    </location>
</feature>
<feature type="domain" description="TSP type-1 7" evidence="3">
    <location>
        <begin position="1152"/>
        <end position="1206"/>
    </location>
</feature>
<feature type="domain" description="TSP type-1 8" evidence="3">
    <location>
        <begin position="1207"/>
        <end position="1264"/>
    </location>
</feature>
<feature type="domain" description="TSP type-1 9" evidence="3">
    <location>
        <begin position="1304"/>
        <end position="1356"/>
    </location>
</feature>
<feature type="domain" description="TSP type-1 10" evidence="3">
    <location>
        <begin position="1358"/>
        <end position="1416"/>
    </location>
</feature>
<feature type="domain" description="TSP type-1 11" evidence="3">
    <location>
        <begin position="1417"/>
        <end position="1475"/>
    </location>
</feature>
<feature type="domain" description="TSP type-1 12" evidence="3">
    <location>
        <begin position="1476"/>
        <end position="1531"/>
    </location>
</feature>
<feature type="domain" description="TSP type-1 13" evidence="3">
    <location>
        <begin position="1535"/>
        <end position="1588"/>
    </location>
</feature>
<feature type="domain" description="TSP type-1 14" evidence="3">
    <location>
        <begin position="1589"/>
        <end position="1652"/>
    </location>
</feature>
<feature type="domain" description="TSP type-1 15" evidence="3">
    <location>
        <begin position="1654"/>
        <end position="1710"/>
    </location>
</feature>
<feature type="domain" description="GON" evidence="5">
    <location>
        <begin position="1711"/>
        <end position="1910"/>
    </location>
</feature>
<feature type="region of interest" description="Spacer">
    <location>
        <begin position="724"/>
        <end position="846"/>
    </location>
</feature>
<feature type="active site" evidence="4 6">
    <location>
        <position position="404"/>
    </location>
</feature>
<feature type="binding site" evidence="1">
    <location>
        <position position="403"/>
    </location>
    <ligand>
        <name>Zn(2+)</name>
        <dbReference type="ChEBI" id="CHEBI:29105"/>
        <note>catalytic</note>
    </ligand>
</feature>
<feature type="binding site" evidence="1">
    <location>
        <position position="407"/>
    </location>
    <ligand>
        <name>Zn(2+)</name>
        <dbReference type="ChEBI" id="CHEBI:29105"/>
        <note>catalytic</note>
    </ligand>
</feature>
<feature type="binding site" evidence="1">
    <location>
        <position position="413"/>
    </location>
    <ligand>
        <name>Zn(2+)</name>
        <dbReference type="ChEBI" id="CHEBI:29105"/>
        <note>catalytic</note>
    </ligand>
</feature>
<feature type="glycosylation site" description="N-linked (GlcNAc...) asparagine" evidence="2">
    <location>
        <position position="92"/>
    </location>
</feature>
<feature type="glycosylation site" description="N-linked (GlcNAc...) asparagine" evidence="2">
    <location>
        <position position="191"/>
    </location>
</feature>
<feature type="glycosylation site" description="N-linked (GlcNAc...) asparagine" evidence="2">
    <location>
        <position position="445"/>
    </location>
</feature>
<feature type="glycosylation site" description="N-linked (GlcNAc...) asparagine" evidence="2">
    <location>
        <position position="702"/>
    </location>
</feature>
<feature type="glycosylation site" description="N-linked (GlcNAc...) asparagine" evidence="2">
    <location>
        <position position="717"/>
    </location>
</feature>
<feature type="glycosylation site" description="N-linked (GlcNAc...) asparagine" evidence="2">
    <location>
        <position position="728"/>
    </location>
</feature>
<feature type="glycosylation site" description="N-linked (GlcNAc...) asparagine" evidence="2">
    <location>
        <position position="809"/>
    </location>
</feature>
<feature type="glycosylation site" description="N-linked (GlcNAc...) asparagine" evidence="2">
    <location>
        <position position="870"/>
    </location>
</feature>
<feature type="glycosylation site" description="N-linked (GlcNAc...) asparagine" evidence="2">
    <location>
        <position position="1061"/>
    </location>
</feature>
<feature type="glycosylation site" description="N-linked (GlcNAc...) asparagine" evidence="2">
    <location>
        <position position="1456"/>
    </location>
</feature>
<feature type="glycosylation site" description="N-linked (GlcNAc...) asparagine" evidence="2">
    <location>
        <position position="1542"/>
    </location>
</feature>
<feature type="glycosylation site" description="N-linked (GlcNAc...) asparagine" evidence="2">
    <location>
        <position position="1572"/>
    </location>
</feature>
<feature type="glycosylation site" description="N-linked (GlcNAc...) asparagine" evidence="2">
    <location>
        <position position="1763"/>
    </location>
</feature>
<feature type="glycosylation site" description="N-linked (GlcNAc...) asparagine" evidence="2">
    <location>
        <position position="1781"/>
    </location>
</feature>
<feature type="glycosylation site" description="N-linked (GlcNAc...) asparagine" evidence="2">
    <location>
        <position position="1852"/>
    </location>
</feature>
<feature type="disulfide bond" evidence="1">
    <location>
        <begin position="334"/>
        <end position="387"/>
    </location>
</feature>
<feature type="disulfide bond" evidence="1">
    <location>
        <begin position="363"/>
        <end position="369"/>
    </location>
</feature>
<feature type="disulfide bond" evidence="1">
    <location>
        <begin position="381"/>
        <end position="462"/>
    </location>
</feature>
<feature type="disulfide bond" evidence="1">
    <location>
        <begin position="419"/>
        <end position="446"/>
    </location>
</feature>
<feature type="disulfide bond" evidence="1">
    <location>
        <begin position="489"/>
        <end position="511"/>
    </location>
</feature>
<feature type="disulfide bond" evidence="1">
    <location>
        <begin position="500"/>
        <end position="521"/>
    </location>
</feature>
<feature type="disulfide bond" evidence="1">
    <location>
        <begin position="506"/>
        <end position="540"/>
    </location>
</feature>
<feature type="disulfide bond" evidence="1">
    <location>
        <begin position="534"/>
        <end position="545"/>
    </location>
</feature>
<feature type="disulfide bond" evidence="1">
    <location>
        <begin position="568"/>
        <end position="605"/>
    </location>
</feature>
<feature type="disulfide bond" evidence="1">
    <location>
        <begin position="572"/>
        <end position="610"/>
    </location>
</feature>
<feature type="disulfide bond" evidence="1">
    <location>
        <begin position="583"/>
        <end position="595"/>
    </location>
</feature>
<feature type="splice variant" id="VSP_007106" description="In isoform 2." evidence="8">
    <original>THDICVQGQCM</original>
    <variation>SYNIDCNCVLK</variation>
    <location>
        <begin position="683"/>
        <end position="693"/>
    </location>
</feature>
<feature type="splice variant" id="VSP_047084" description="In isoform 3." evidence="7">
    <original>ILIE</original>
    <variation>LILQ</variation>
    <location>
        <begin position="818"/>
        <end position="821"/>
    </location>
</feature>
<feature type="splice variant" id="VSP_007107" description="In isoform 2." evidence="8">
    <original>CSASCGKGRKYREVFCIDQFQRKLEDTNCSQVQKPPTHKACRSVRCPSWKANSWNECSVTCGSGVQQRDVYCRLKG</original>
    <variation>EDLKVKLLPQRTIILWELMKNIFCHGKHSHMYLINVVTDHLLYPRHCDPETIETYFLSLWSLQFTWGDLKYYKNSL</variation>
    <location>
        <begin position="1429"/>
        <end position="1504"/>
    </location>
</feature>
<feature type="splice variant" id="VSP_007108" description="In isoform 2." evidence="8">
    <location>
        <begin position="1505"/>
        <end position="1910"/>
    </location>
</feature>
<feature type="sequence variant" id="VAR_057088" description="In dbSNP:rs7302446.">
    <original>K</original>
    <variation>M</variation>
    <location>
        <position position="876"/>
    </location>
</feature>
<feature type="sequence variant" id="VAR_057089" description="In dbSNP:rs7297737.">
    <original>R</original>
    <variation>H</variation>
    <location>
        <position position="1000"/>
    </location>
</feature>
<feature type="sequence variant" id="VAR_057090" description="In dbSNP:rs7310011.">
    <original>S</original>
    <variation>F</variation>
    <location>
        <position position="1273"/>
    </location>
</feature>
<feature type="sequence conflict" description="In Ref. 2; CAD56159/CAD56160." evidence="9" ref="2">
    <original>T</original>
    <variation>V</variation>
    <location>
        <position position="152"/>
    </location>
</feature>
<feature type="sequence conflict" description="In Ref. 2; CAD56159/CAD56160." evidence="9" ref="2">
    <original>E</original>
    <variation>Y</variation>
    <location>
        <position position="360"/>
    </location>
</feature>
<feature type="sequence conflict" description="In Ref. 1; AAO15766." evidence="9" ref="1">
    <original>M</original>
    <variation>T</variation>
    <location>
        <position position="371"/>
    </location>
</feature>
<feature type="sequence conflict" description="In Ref. 2; CAD56159/CAD56160." evidence="9" ref="2">
    <original>D</original>
    <variation>E</variation>
    <location>
        <position position="456"/>
    </location>
</feature>
<feature type="sequence conflict" description="In Ref. 2; CAD56159/CAD56160." evidence="9" ref="2">
    <original>I</original>
    <variation>V</variation>
    <location>
        <position position="648"/>
    </location>
</feature>
<feature type="sequence conflict" description="In Ref. 2; CAD56159/CAD56160." evidence="9" ref="2">
    <location>
        <begin position="792"/>
        <end position="793"/>
    </location>
</feature>
<feature type="sequence conflict" description="In Ref. 1; AAO15766." evidence="9" ref="1">
    <original>WHVIG</original>
    <variation>GMLLAK</variation>
    <location>
        <begin position="908"/>
        <end position="912"/>
    </location>
</feature>
<feature type="sequence conflict" description="In Ref. 2; CAD56159/CAD56160." evidence="9" ref="2">
    <original>S</original>
    <variation>Q</variation>
    <location>
        <position position="1315"/>
    </location>
</feature>
<feature type="sequence conflict" description="In Ref. 1; AAO15766." evidence="9" ref="1">
    <original>R</original>
    <variation>T</variation>
    <location>
        <position position="1327"/>
    </location>
</feature>
<feature type="sequence conflict" description="In Ref. 2; CAD56159." evidence="9" ref="2">
    <original>T</original>
    <variation>A</variation>
    <location>
        <position position="1816"/>
    </location>
</feature>
<feature type="sequence conflict" description="In Ref. 2; CAD56159." evidence="9" ref="2">
    <original>E</original>
    <variation>Q</variation>
    <location>
        <position position="1881"/>
    </location>
</feature>
<comment type="function">
    <text>May play a role in tissue-remodeling process occurring in both normal and pathological conditions. May have a protease-independent function in the transport from the endoplasmic reticulum to the Golgi apparatus of secretory cargos, mediated by the GON domain.</text>
</comment>
<comment type="cofactor">
    <cofactor evidence="1">
        <name>Zn(2+)</name>
        <dbReference type="ChEBI" id="CHEBI:29105"/>
    </cofactor>
    <text evidence="1">Binds 1 zinc ion per subunit.</text>
</comment>
<comment type="subcellular location">
    <subcellularLocation>
        <location evidence="1">Secreted</location>
        <location evidence="1">Extracellular space</location>
        <location evidence="1">Extracellular matrix</location>
    </subcellularLocation>
</comment>
<comment type="alternative products">
    <event type="alternative splicing"/>
    <isoform>
        <id>P59510-1</id>
        <name>1</name>
        <sequence type="displayed"/>
    </isoform>
    <isoform>
        <id>P59510-2</id>
        <name>2</name>
        <sequence type="described" ref="VSP_007106 VSP_007107 VSP_007108"/>
    </isoform>
    <isoform>
        <id>P59510-3</id>
        <name>3</name>
        <sequence type="described" ref="VSP_047084"/>
    </isoform>
</comment>
<comment type="tissue specificity">
    <text>Very sparingly expressed, although is detected at low levels in testis, prostate, ovary, heart, placenta, lung and pancreas. Overexpressed in several brain, colon and breast carcinomas.</text>
</comment>
<comment type="PTM">
    <text evidence="1">The precursor is cleaved by a furin endopeptidase.</text>
</comment>
<comment type="PTM">
    <text evidence="1">Glycosylated. Can be O-fucosylated by POFUT2 on a serine or a threonine residue found within the consensus sequence C1-X(2)-(S/T)-C2-G of the TSP type-1 repeat domains where C1 and C2 are the first and second cysteine residue of the repeat, respectively. Fucosylated repeats can then be further glycosylated by the addition of a beta-1,3-glucose residue by the glucosyltransferase, B3GALTL. Fucosylation mediates the efficient secretion of ADAMTS family members. Can also be C-glycosylated with one or two mannose molecules on tryptophan residues within the consensus sequence W-X-X-W of the TPRs, and N-glycosylated. These other glycosylations can also facilitate secretion (By similarity).</text>
</comment>
<gene>
    <name type="primary">ADAMTS20</name>
</gene>
<name>ATS20_HUMAN</name>
<evidence type="ECO:0000250" key="1"/>
<evidence type="ECO:0000255" key="2"/>
<evidence type="ECO:0000255" key="3">
    <source>
        <dbReference type="PROSITE-ProRule" id="PRU00210"/>
    </source>
</evidence>
<evidence type="ECO:0000255" key="4">
    <source>
        <dbReference type="PROSITE-ProRule" id="PRU00276"/>
    </source>
</evidence>
<evidence type="ECO:0000255" key="5">
    <source>
        <dbReference type="PROSITE-ProRule" id="PRU00383"/>
    </source>
</evidence>
<evidence type="ECO:0000255" key="6">
    <source>
        <dbReference type="PROSITE-ProRule" id="PRU10095"/>
    </source>
</evidence>
<evidence type="ECO:0000303" key="7">
    <source>
    </source>
</evidence>
<evidence type="ECO:0000303" key="8">
    <source>
    </source>
</evidence>
<evidence type="ECO:0000305" key="9"/>